<accession>O92367</accession>
<reference key="1">
    <citation type="submission" date="1998-09" db="EMBL/GenBank/DDBJ databases">
        <title>Sequence of the hemagglutinin-esterase (HE) genes of two enterotropic MHV strains.</title>
        <authorList>
            <person name="Compton S.R."/>
            <person name="Moore K.M."/>
        </authorList>
    </citation>
    <scope>NUCLEOTIDE SEQUENCE [MRNA]</scope>
</reference>
<reference key="2">
    <citation type="journal article" date="2005" name="J. Biol. Chem.">
        <title>Nidovirus sialate-O-acetylesterases: evolution and substrate specificity of coronaviral and toroviral receptor-destroying enzymes.</title>
        <authorList>
            <person name="Smits S.L."/>
            <person name="Gerwig G.J."/>
            <person name="van Vliet A.L."/>
            <person name="Lissenberg A."/>
            <person name="Briza P."/>
            <person name="Kamerling J.P."/>
            <person name="Vlasak R."/>
            <person name="de Groot R.J."/>
        </authorList>
    </citation>
    <scope>CHARACTERIZATION</scope>
</reference>
<sequence>MARTDAMAPRTLLLVLSLGYAFGFNEPLNVVSHLNDDWFLFGDSRSDCNHINNLSQQNYNYMDINPELCKSGKISAKAGNSLFKSFHFTDFYNYTGEGSQIIFYEGVNFTPYVGFKCLNNGDNNRWMGNKARFYTQLYQKMAHYRSLSVINITYTYNGSAGPVSMCKHIANGVTLTLNNPTFIGKEVSKPDYYYESEANFTLQGCDEFIVPLCVFNGQYLSSKLYYDDSQYYYNVDTGVLYGFNSTLNITSGLDLTCIYLALTPGNYISISNELLLTVPSKAICLRKPKAFTPVQVVDSRWHSNRQSDNMTAIACQLPYCYFRNTTSDYNGVYDSHHGDAGFTSILAGLMYNVSCLAQQGAFVYNNVSSSWPQYPYGHCPTAANIVFMAPVCMYDPLPVILLGVLLGIAVLIIVFLMFYFMTDSGVRLHEA</sequence>
<name>HEMA_CVMDV</name>
<dbReference type="EC" id="3.1.1.53" evidence="1"/>
<dbReference type="EMBL" id="AF091734">
    <property type="protein sequence ID" value="AAC63044.1"/>
    <property type="molecule type" value="mRNA"/>
</dbReference>
<dbReference type="PDB" id="5JIF">
    <property type="method" value="X-ray"/>
    <property type="resolution" value="2.00 A"/>
    <property type="chains" value="A/B=24-395"/>
</dbReference>
<dbReference type="PDBsum" id="5JIF"/>
<dbReference type="SMR" id="O92367"/>
<dbReference type="GlyCosmos" id="O92367">
    <property type="glycosylation" value="11 sites, No reported glycans"/>
</dbReference>
<dbReference type="GO" id="GO:0020002">
    <property type="term" value="C:host cell plasma membrane"/>
    <property type="evidence" value="ECO:0007669"/>
    <property type="project" value="UniProtKB-SubCell"/>
</dbReference>
<dbReference type="GO" id="GO:0016020">
    <property type="term" value="C:membrane"/>
    <property type="evidence" value="ECO:0007669"/>
    <property type="project" value="UniProtKB-UniRule"/>
</dbReference>
<dbReference type="GO" id="GO:0019031">
    <property type="term" value="C:viral envelope"/>
    <property type="evidence" value="ECO:0007669"/>
    <property type="project" value="UniProtKB-UniRule"/>
</dbReference>
<dbReference type="GO" id="GO:0055036">
    <property type="term" value="C:virion membrane"/>
    <property type="evidence" value="ECO:0007669"/>
    <property type="project" value="UniProtKB-SubCell"/>
</dbReference>
<dbReference type="GO" id="GO:0046789">
    <property type="term" value="F:host cell surface receptor binding"/>
    <property type="evidence" value="ECO:0007669"/>
    <property type="project" value="UniProtKB-UniRule"/>
</dbReference>
<dbReference type="GO" id="GO:0106331">
    <property type="term" value="F:sialate 4-O-acetylesterase activity"/>
    <property type="evidence" value="ECO:0007669"/>
    <property type="project" value="RHEA"/>
</dbReference>
<dbReference type="GO" id="GO:0106330">
    <property type="term" value="F:sialate 9-O-acetylesterase activity"/>
    <property type="evidence" value="ECO:0007669"/>
    <property type="project" value="RHEA"/>
</dbReference>
<dbReference type="GO" id="GO:0019064">
    <property type="term" value="P:fusion of virus membrane with host plasma membrane"/>
    <property type="evidence" value="ECO:0007669"/>
    <property type="project" value="UniProtKB-UniRule"/>
</dbReference>
<dbReference type="HAMAP" id="MF_04207">
    <property type="entry name" value="BETA_CORONA_HE"/>
    <property type="match status" value="1"/>
</dbReference>
<dbReference type="InterPro" id="IPR008980">
    <property type="entry name" value="Capsid_hemagglutn"/>
</dbReference>
<dbReference type="InterPro" id="IPR042545">
    <property type="entry name" value="HEMA"/>
</dbReference>
<dbReference type="InterPro" id="IPR007142">
    <property type="entry name" value="Hemagglutn-estrase_core"/>
</dbReference>
<dbReference type="InterPro" id="IPR003860">
    <property type="entry name" value="Hemagglutn-estrase_hemagglutn"/>
</dbReference>
<dbReference type="Pfam" id="PF03996">
    <property type="entry name" value="Hema_esterase"/>
    <property type="match status" value="1"/>
</dbReference>
<dbReference type="Pfam" id="PF02710">
    <property type="entry name" value="Hema_HEFG"/>
    <property type="match status" value="1"/>
</dbReference>
<dbReference type="SUPFAM" id="SSF52266">
    <property type="entry name" value="SGNH hydrolase"/>
    <property type="match status" value="1"/>
</dbReference>
<dbReference type="SUPFAM" id="SSF49818">
    <property type="entry name" value="Viral protein domain"/>
    <property type="match status" value="1"/>
</dbReference>
<organism>
    <name type="scientific">Murine coronavirus (strain DVIM)</name>
    <name type="common">MHV-DVIM</name>
    <name type="synonym">Murine hepatitis virus</name>
    <dbReference type="NCBI Taxonomy" id="231423"/>
    <lineage>
        <taxon>Viruses</taxon>
        <taxon>Riboviria</taxon>
        <taxon>Orthornavirae</taxon>
        <taxon>Pisuviricota</taxon>
        <taxon>Pisoniviricetes</taxon>
        <taxon>Nidovirales</taxon>
        <taxon>Cornidovirineae</taxon>
        <taxon>Coronaviridae</taxon>
        <taxon>Orthocoronavirinae</taxon>
        <taxon>Betacoronavirus</taxon>
        <taxon>Embecovirus</taxon>
        <taxon>Murine coronavirus</taxon>
    </lineage>
</organism>
<proteinExistence type="evidence at protein level"/>
<feature type="signal peptide" evidence="1">
    <location>
        <begin position="1"/>
        <end position="21"/>
    </location>
</feature>
<feature type="chain" id="PRO_0000037146" description="Hemagglutinin-esterase" evidence="1">
    <location>
        <begin position="22"/>
        <end position="431"/>
    </location>
</feature>
<feature type="topological domain" description="Virion surface" evidence="1">
    <location>
        <begin position="22"/>
        <end position="399"/>
    </location>
</feature>
<feature type="transmembrane region" description="Helical" evidence="1">
    <location>
        <begin position="400"/>
        <end position="420"/>
    </location>
</feature>
<feature type="topological domain" description="Intravirion" evidence="1">
    <location>
        <begin position="421"/>
        <end position="431"/>
    </location>
</feature>
<feature type="region of interest" description="Esterase domain 1" evidence="1">
    <location>
        <begin position="11"/>
        <end position="131"/>
    </location>
</feature>
<feature type="region of interest" description="Receptor binding" evidence="1">
    <location>
        <begin position="132"/>
        <end position="274"/>
    </location>
</feature>
<feature type="region of interest" description="Esterase domain 2" evidence="1">
    <location>
        <begin position="275"/>
        <end position="387"/>
    </location>
</feature>
<feature type="active site" description="Nucleophile" evidence="1">
    <location>
        <position position="44"/>
    </location>
</feature>
<feature type="active site" description="Charge relay system" evidence="1">
    <location>
        <position position="334"/>
    </location>
</feature>
<feature type="active site" description="Charge relay system" evidence="1">
    <location>
        <position position="337"/>
    </location>
</feature>
<feature type="glycosylation site" description="N-linked (GlcNAc...) asparagine; by host" evidence="1">
    <location>
        <position position="53"/>
    </location>
</feature>
<feature type="glycosylation site" description="N-linked (GlcNAc...) asparagine; by host" evidence="1">
    <location>
        <position position="93"/>
    </location>
</feature>
<feature type="glycosylation site" description="N-linked (GlcNAc...) asparagine; by host" evidence="1">
    <location>
        <position position="151"/>
    </location>
</feature>
<feature type="glycosylation site" description="N-linked (GlcNAc...) asparagine; by host" evidence="1">
    <location>
        <position position="157"/>
    </location>
</feature>
<feature type="glycosylation site" description="N-linked (GlcNAc...) asparagine; by host" evidence="1">
    <location>
        <position position="199"/>
    </location>
</feature>
<feature type="glycosylation site" description="N-linked (GlcNAc...) asparagine; by host" evidence="1">
    <location>
        <position position="244"/>
    </location>
</feature>
<feature type="glycosylation site" description="N-linked (GlcNAc...) asparagine; by host" evidence="1">
    <location>
        <position position="248"/>
    </location>
</feature>
<feature type="glycosylation site" description="N-linked (GlcNAc...) asparagine; by host" evidence="1">
    <location>
        <position position="309"/>
    </location>
</feature>
<feature type="glycosylation site" description="N-linked (GlcNAc...) asparagine; by host" evidence="1">
    <location>
        <position position="324"/>
    </location>
</feature>
<feature type="glycosylation site" description="N-linked (GlcNAc...) asparagine; by host" evidence="1">
    <location>
        <position position="352"/>
    </location>
</feature>
<feature type="glycosylation site" description="N-linked (GlcNAc...) asparagine; by host" evidence="1">
    <location>
        <position position="366"/>
    </location>
</feature>
<feature type="disulfide bond" evidence="1">
    <location>
        <begin position="48"/>
        <end position="69"/>
    </location>
</feature>
<feature type="disulfide bond" evidence="1">
    <location>
        <begin position="117"/>
        <end position="166"/>
    </location>
</feature>
<feature type="disulfide bond" evidence="1">
    <location>
        <begin position="205"/>
        <end position="284"/>
    </location>
</feature>
<feature type="disulfide bond" evidence="1">
    <location>
        <begin position="213"/>
        <end position="257"/>
    </location>
</feature>
<feature type="disulfide bond" evidence="1">
    <location>
        <begin position="315"/>
        <end position="320"/>
    </location>
</feature>
<feature type="disulfide bond" evidence="1">
    <location>
        <begin position="355"/>
        <end position="379"/>
    </location>
</feature>
<feature type="strand" evidence="2">
    <location>
        <begin position="33"/>
        <end position="36"/>
    </location>
</feature>
<feature type="strand" evidence="2">
    <location>
        <begin position="38"/>
        <end position="42"/>
    </location>
</feature>
<feature type="helix" evidence="2">
    <location>
        <begin position="44"/>
        <end position="46"/>
    </location>
</feature>
<feature type="helix" evidence="2">
    <location>
        <begin position="48"/>
        <end position="53"/>
    </location>
</feature>
<feature type="helix" evidence="2">
    <location>
        <begin position="66"/>
        <end position="70"/>
    </location>
</feature>
<feature type="strand" evidence="2">
    <location>
        <begin position="74"/>
        <end position="76"/>
    </location>
</feature>
<feature type="helix" evidence="2">
    <location>
        <begin position="82"/>
        <end position="87"/>
    </location>
</feature>
<feature type="strand" evidence="2">
    <location>
        <begin position="88"/>
        <end position="90"/>
    </location>
</feature>
<feature type="strand" evidence="2">
    <location>
        <begin position="99"/>
        <end position="104"/>
    </location>
</feature>
<feature type="turn" evidence="2">
    <location>
        <begin position="111"/>
        <end position="113"/>
    </location>
</feature>
<feature type="helix" evidence="2">
    <location>
        <begin position="123"/>
        <end position="140"/>
    </location>
</feature>
<feature type="turn" evidence="2">
    <location>
        <begin position="141"/>
        <end position="143"/>
    </location>
</feature>
<feature type="strand" evidence="2">
    <location>
        <begin position="144"/>
        <end position="151"/>
    </location>
</feature>
<feature type="strand" evidence="2">
    <location>
        <begin position="157"/>
        <end position="159"/>
    </location>
</feature>
<feature type="strand" evidence="2">
    <location>
        <begin position="167"/>
        <end position="169"/>
    </location>
</feature>
<feature type="strand" evidence="2">
    <location>
        <begin position="174"/>
        <end position="177"/>
    </location>
</feature>
<feature type="strand" evidence="2">
    <location>
        <begin position="179"/>
        <end position="183"/>
    </location>
</feature>
<feature type="helix" evidence="2">
    <location>
        <begin position="191"/>
        <end position="193"/>
    </location>
</feature>
<feature type="strand" evidence="2">
    <location>
        <begin position="197"/>
        <end position="202"/>
    </location>
</feature>
<feature type="strand" evidence="2">
    <location>
        <begin position="204"/>
        <end position="218"/>
    </location>
</feature>
<feature type="strand" evidence="2">
    <location>
        <begin position="229"/>
        <end position="234"/>
    </location>
</feature>
<feature type="turn" evidence="2">
    <location>
        <begin position="235"/>
        <end position="237"/>
    </location>
</feature>
<feature type="strand" evidence="2">
    <location>
        <begin position="239"/>
        <end position="244"/>
    </location>
</feature>
<feature type="strand" evidence="2">
    <location>
        <begin position="254"/>
        <end position="262"/>
    </location>
</feature>
<feature type="strand" evidence="2">
    <location>
        <begin position="264"/>
        <end position="270"/>
    </location>
</feature>
<feature type="strand" evidence="2">
    <location>
        <begin position="276"/>
        <end position="278"/>
    </location>
</feature>
<feature type="strand" evidence="2">
    <location>
        <begin position="281"/>
        <end position="288"/>
    </location>
</feature>
<feature type="strand" evidence="2">
    <location>
        <begin position="294"/>
        <end position="297"/>
    </location>
</feature>
<feature type="helix" evidence="2">
    <location>
        <begin position="310"/>
        <end position="314"/>
    </location>
</feature>
<feature type="turn" evidence="2">
    <location>
        <begin position="317"/>
        <end position="319"/>
    </location>
</feature>
<feature type="strand" evidence="2">
    <location>
        <begin position="320"/>
        <end position="323"/>
    </location>
</feature>
<feature type="strand" evidence="2">
    <location>
        <begin position="332"/>
        <end position="334"/>
    </location>
</feature>
<feature type="helix" evidence="2">
    <location>
        <begin position="340"/>
        <end position="346"/>
    </location>
</feature>
<feature type="helix" evidence="2">
    <location>
        <begin position="347"/>
        <end position="350"/>
    </location>
</feature>
<feature type="strand" evidence="2">
    <location>
        <begin position="354"/>
        <end position="357"/>
    </location>
</feature>
<feature type="strand" evidence="2">
    <location>
        <begin position="360"/>
        <end position="363"/>
    </location>
</feature>
<feature type="strand" evidence="2">
    <location>
        <begin position="365"/>
        <end position="367"/>
    </location>
</feature>
<feature type="strand" evidence="2">
    <location>
        <begin position="376"/>
        <end position="378"/>
    </location>
</feature>
<comment type="function">
    <text evidence="1">Structural protein that makes short spikes at the surface of the virus. Contains receptor binding and receptor-destroying activities. Mediates de-O-acetylation of N-acetyl-4-O-acetylneuraminic acid, which is probably the receptor determinant recognized by the virus on the surface of erythrocytes and susceptible cells. This receptor-destroying activity is important for virus release as it probably helps preventing self-aggregation and ensures the efficient spread of the progeny virus from cell to cell. May serve as a secondary viral attachment protein for initiating infection, the spike protein being the major one. May become a target for both the humoral and the cellular branches of the immune system.</text>
</comment>
<comment type="catalytic activity">
    <reaction evidence="1">
        <text>N-acetyl-9-O-acetylneuraminate + H2O = N-acetylneuraminate + acetate + H(+)</text>
        <dbReference type="Rhea" id="RHEA:22600"/>
        <dbReference type="ChEBI" id="CHEBI:15377"/>
        <dbReference type="ChEBI" id="CHEBI:15378"/>
        <dbReference type="ChEBI" id="CHEBI:28999"/>
        <dbReference type="ChEBI" id="CHEBI:30089"/>
        <dbReference type="ChEBI" id="CHEBI:35418"/>
        <dbReference type="EC" id="3.1.1.53"/>
    </reaction>
</comment>
<comment type="catalytic activity">
    <reaction evidence="1">
        <text>N-acetyl-4-O-acetylneuraminate + H2O = N-acetylneuraminate + acetate + H(+)</text>
        <dbReference type="Rhea" id="RHEA:25564"/>
        <dbReference type="ChEBI" id="CHEBI:15377"/>
        <dbReference type="ChEBI" id="CHEBI:15378"/>
        <dbReference type="ChEBI" id="CHEBI:29006"/>
        <dbReference type="ChEBI" id="CHEBI:30089"/>
        <dbReference type="ChEBI" id="CHEBI:35418"/>
        <dbReference type="EC" id="3.1.1.53"/>
    </reaction>
</comment>
<comment type="subunit">
    <text evidence="1">Homodimer; disulfide-linked. Forms a complex with the M protein in the pre-Golgi. Associates then with S-M complex to form a ternary complex S-M-HE.</text>
</comment>
<comment type="subcellular location">
    <subcellularLocation>
        <location evidence="1">Virion membrane</location>
        <topology evidence="1">Single-pass type I membrane protein</topology>
    </subcellularLocation>
    <subcellularLocation>
        <location evidence="1">Host cell membrane</location>
        <topology evidence="1">Single-pass type I membrane protein</topology>
    </subcellularLocation>
    <text evidence="1">In infected cells becomes incorporated into the envelope of virions during virus assembly at the endoplasmic reticulum and cis Golgi. However, some may escape incorporation into virions and subsequently migrate to the cell surface.</text>
</comment>
<comment type="PTM">
    <text evidence="1">N-glycosylated in the host RER.</text>
</comment>
<comment type="similarity">
    <text evidence="1">Belongs to the influenza type C/coronaviruses hemagglutinin-esterase family.</text>
</comment>
<protein>
    <recommendedName>
        <fullName evidence="1">Hemagglutinin-esterase</fullName>
        <shortName evidence="1">HE protein</shortName>
        <ecNumber evidence="1">3.1.1.53</ecNumber>
    </recommendedName>
    <alternativeName>
        <fullName evidence="1">E3 glycoprotein</fullName>
    </alternativeName>
</protein>
<keyword id="KW-0002">3D-structure</keyword>
<keyword id="KW-1015">Disulfide bond</keyword>
<keyword id="KW-0325">Glycoprotein</keyword>
<keyword id="KW-0348">Hemagglutinin</keyword>
<keyword id="KW-1032">Host cell membrane</keyword>
<keyword id="KW-1043">Host membrane</keyword>
<keyword id="KW-0378">Hydrolase</keyword>
<keyword id="KW-0472">Membrane</keyword>
<keyword id="KW-0732">Signal</keyword>
<keyword id="KW-0812">Transmembrane</keyword>
<keyword id="KW-1133">Transmembrane helix</keyword>
<keyword id="KW-0261">Viral envelope protein</keyword>
<keyword id="KW-0946">Virion</keyword>
<gene>
    <name evidence="1" type="primary">HE</name>
    <name type="ORF">2b</name>
</gene>
<organismHost>
    <name type="scientific">Mus</name>
    <name type="common">mice</name>
    <dbReference type="NCBI Taxonomy" id="10088"/>
</organismHost>
<evidence type="ECO:0000255" key="1">
    <source>
        <dbReference type="HAMAP-Rule" id="MF_04207"/>
    </source>
</evidence>
<evidence type="ECO:0007829" key="2">
    <source>
        <dbReference type="PDB" id="5JIF"/>
    </source>
</evidence>